<proteinExistence type="evidence at protein level"/>
<evidence type="ECO:0000250" key="1"/>
<evidence type="ECO:0000250" key="2">
    <source>
        <dbReference type="UniProtKB" id="Q86WW8"/>
    </source>
</evidence>
<evidence type="ECO:0000255" key="3">
    <source>
        <dbReference type="PROSITE-ProRule" id="PRU01150"/>
    </source>
</evidence>
<evidence type="ECO:0000305" key="4"/>
<dbReference type="EMBL" id="AK166651">
    <property type="protein sequence ID" value="BAE38918.1"/>
    <property type="molecule type" value="mRNA"/>
</dbReference>
<dbReference type="EMBL" id="AK169639">
    <property type="protein sequence ID" value="BAE41270.1"/>
    <property type="molecule type" value="mRNA"/>
</dbReference>
<dbReference type="EMBL" id="BC002137">
    <property type="protein sequence ID" value="AAH02137.1"/>
    <property type="molecule type" value="mRNA"/>
</dbReference>
<dbReference type="CCDS" id="CCDS35541.1"/>
<dbReference type="RefSeq" id="NP_932123.3">
    <property type="nucleotide sequence ID" value="NM_198006.4"/>
</dbReference>
<dbReference type="SMR" id="Q99M07"/>
<dbReference type="BioGRID" id="218007">
    <property type="interactions" value="1"/>
</dbReference>
<dbReference type="FunCoup" id="Q99M07">
    <property type="interactions" value="1314"/>
</dbReference>
<dbReference type="STRING" id="10090.ENSMUSP00000027286"/>
<dbReference type="iPTMnet" id="Q99M07"/>
<dbReference type="PhosphoSitePlus" id="Q99M07"/>
<dbReference type="PaxDb" id="10090-ENSMUSP00000027286"/>
<dbReference type="PeptideAtlas" id="Q99M07"/>
<dbReference type="ProteomicsDB" id="277989"/>
<dbReference type="Pumba" id="Q99M07"/>
<dbReference type="Antibodypedia" id="71495">
    <property type="antibodies" value="7 antibodies from 7 providers"/>
</dbReference>
<dbReference type="Ensembl" id="ENSMUST00000027286.7">
    <property type="protein sequence ID" value="ENSMUSP00000027286.7"/>
    <property type="gene ID" value="ENSMUSG00000026112.8"/>
</dbReference>
<dbReference type="GeneID" id="76178"/>
<dbReference type="KEGG" id="mmu:76178"/>
<dbReference type="UCSC" id="uc007aro.2">
    <property type="organism name" value="mouse"/>
</dbReference>
<dbReference type="AGR" id="MGI:1923428"/>
<dbReference type="CTD" id="493753"/>
<dbReference type="MGI" id="MGI:1923428">
    <property type="gene designation" value="Coa5"/>
</dbReference>
<dbReference type="VEuPathDB" id="HostDB:ENSMUSG00000026112"/>
<dbReference type="eggNOG" id="KOG4114">
    <property type="taxonomic scope" value="Eukaryota"/>
</dbReference>
<dbReference type="GeneTree" id="ENSGT00390000005548"/>
<dbReference type="HOGENOM" id="CLU_138069_2_2_1"/>
<dbReference type="InParanoid" id="Q99M07"/>
<dbReference type="OMA" id="KKTPKEC"/>
<dbReference type="OrthoDB" id="282149at2759"/>
<dbReference type="PhylomeDB" id="Q99M07"/>
<dbReference type="TreeFam" id="TF313953"/>
<dbReference type="Reactome" id="R-MMU-9864848">
    <property type="pathway name" value="Complex IV assembly"/>
</dbReference>
<dbReference type="BioGRID-ORCS" id="76178">
    <property type="hits" value="15 hits in 75 CRISPR screens"/>
</dbReference>
<dbReference type="ChiTaRS" id="Coa5">
    <property type="organism name" value="mouse"/>
</dbReference>
<dbReference type="PRO" id="PR:Q99M07"/>
<dbReference type="Proteomes" id="UP000000589">
    <property type="component" value="Chromosome 1"/>
</dbReference>
<dbReference type="RNAct" id="Q99M07">
    <property type="molecule type" value="protein"/>
</dbReference>
<dbReference type="Bgee" id="ENSMUSG00000026112">
    <property type="expression patterns" value="Expressed in interventricular septum and 254 other cell types or tissues"/>
</dbReference>
<dbReference type="GO" id="GO:0005739">
    <property type="term" value="C:mitochondrion"/>
    <property type="evidence" value="ECO:0007005"/>
    <property type="project" value="MGI"/>
</dbReference>
<dbReference type="GO" id="GO:0002521">
    <property type="term" value="P:leukocyte differentiation"/>
    <property type="evidence" value="ECO:0000315"/>
    <property type="project" value="MGI"/>
</dbReference>
<dbReference type="GO" id="GO:0035264">
    <property type="term" value="P:multicellular organism growth"/>
    <property type="evidence" value="ECO:0000315"/>
    <property type="project" value="MGI"/>
</dbReference>
<dbReference type="GO" id="GO:0048536">
    <property type="term" value="P:spleen development"/>
    <property type="evidence" value="ECO:0000315"/>
    <property type="project" value="MGI"/>
</dbReference>
<dbReference type="GO" id="GO:0048538">
    <property type="term" value="P:thymus development"/>
    <property type="evidence" value="ECO:0000315"/>
    <property type="project" value="MGI"/>
</dbReference>
<dbReference type="InterPro" id="IPR018793">
    <property type="entry name" value="Cyt_c_oxidase_assmbl_Pet191"/>
</dbReference>
<dbReference type="PANTHER" id="PTHR28627">
    <property type="entry name" value="CYTOCHROME C OXIDASE ASSEMBLY FACTOR 5"/>
    <property type="match status" value="1"/>
</dbReference>
<dbReference type="PANTHER" id="PTHR28627:SF1">
    <property type="entry name" value="CYTOCHROME C OXIDASE ASSEMBLY FACTOR 5"/>
    <property type="match status" value="1"/>
</dbReference>
<dbReference type="Pfam" id="PF10203">
    <property type="entry name" value="Pet191_N"/>
    <property type="match status" value="1"/>
</dbReference>
<dbReference type="PROSITE" id="PS51808">
    <property type="entry name" value="CHCH"/>
    <property type="match status" value="1"/>
</dbReference>
<reference key="1">
    <citation type="journal article" date="2005" name="Science">
        <title>The transcriptional landscape of the mammalian genome.</title>
        <authorList>
            <person name="Carninci P."/>
            <person name="Kasukawa T."/>
            <person name="Katayama S."/>
            <person name="Gough J."/>
            <person name="Frith M.C."/>
            <person name="Maeda N."/>
            <person name="Oyama R."/>
            <person name="Ravasi T."/>
            <person name="Lenhard B."/>
            <person name="Wells C."/>
            <person name="Kodzius R."/>
            <person name="Shimokawa K."/>
            <person name="Bajic V.B."/>
            <person name="Brenner S.E."/>
            <person name="Batalov S."/>
            <person name="Forrest A.R."/>
            <person name="Zavolan M."/>
            <person name="Davis M.J."/>
            <person name="Wilming L.G."/>
            <person name="Aidinis V."/>
            <person name="Allen J.E."/>
            <person name="Ambesi-Impiombato A."/>
            <person name="Apweiler R."/>
            <person name="Aturaliya R.N."/>
            <person name="Bailey T.L."/>
            <person name="Bansal M."/>
            <person name="Baxter L."/>
            <person name="Beisel K.W."/>
            <person name="Bersano T."/>
            <person name="Bono H."/>
            <person name="Chalk A.M."/>
            <person name="Chiu K.P."/>
            <person name="Choudhary V."/>
            <person name="Christoffels A."/>
            <person name="Clutterbuck D.R."/>
            <person name="Crowe M.L."/>
            <person name="Dalla E."/>
            <person name="Dalrymple B.P."/>
            <person name="de Bono B."/>
            <person name="Della Gatta G."/>
            <person name="di Bernardo D."/>
            <person name="Down T."/>
            <person name="Engstrom P."/>
            <person name="Fagiolini M."/>
            <person name="Faulkner G."/>
            <person name="Fletcher C.F."/>
            <person name="Fukushima T."/>
            <person name="Furuno M."/>
            <person name="Futaki S."/>
            <person name="Gariboldi M."/>
            <person name="Georgii-Hemming P."/>
            <person name="Gingeras T.R."/>
            <person name="Gojobori T."/>
            <person name="Green R.E."/>
            <person name="Gustincich S."/>
            <person name="Harbers M."/>
            <person name="Hayashi Y."/>
            <person name="Hensch T.K."/>
            <person name="Hirokawa N."/>
            <person name="Hill D."/>
            <person name="Huminiecki L."/>
            <person name="Iacono M."/>
            <person name="Ikeo K."/>
            <person name="Iwama A."/>
            <person name="Ishikawa T."/>
            <person name="Jakt M."/>
            <person name="Kanapin A."/>
            <person name="Katoh M."/>
            <person name="Kawasawa Y."/>
            <person name="Kelso J."/>
            <person name="Kitamura H."/>
            <person name="Kitano H."/>
            <person name="Kollias G."/>
            <person name="Krishnan S.P."/>
            <person name="Kruger A."/>
            <person name="Kummerfeld S.K."/>
            <person name="Kurochkin I.V."/>
            <person name="Lareau L.F."/>
            <person name="Lazarevic D."/>
            <person name="Lipovich L."/>
            <person name="Liu J."/>
            <person name="Liuni S."/>
            <person name="McWilliam S."/>
            <person name="Madan Babu M."/>
            <person name="Madera M."/>
            <person name="Marchionni L."/>
            <person name="Matsuda H."/>
            <person name="Matsuzawa S."/>
            <person name="Miki H."/>
            <person name="Mignone F."/>
            <person name="Miyake S."/>
            <person name="Morris K."/>
            <person name="Mottagui-Tabar S."/>
            <person name="Mulder N."/>
            <person name="Nakano N."/>
            <person name="Nakauchi H."/>
            <person name="Ng P."/>
            <person name="Nilsson R."/>
            <person name="Nishiguchi S."/>
            <person name="Nishikawa S."/>
            <person name="Nori F."/>
            <person name="Ohara O."/>
            <person name="Okazaki Y."/>
            <person name="Orlando V."/>
            <person name="Pang K.C."/>
            <person name="Pavan W.J."/>
            <person name="Pavesi G."/>
            <person name="Pesole G."/>
            <person name="Petrovsky N."/>
            <person name="Piazza S."/>
            <person name="Reed J."/>
            <person name="Reid J.F."/>
            <person name="Ring B.Z."/>
            <person name="Ringwald M."/>
            <person name="Rost B."/>
            <person name="Ruan Y."/>
            <person name="Salzberg S.L."/>
            <person name="Sandelin A."/>
            <person name="Schneider C."/>
            <person name="Schoenbach C."/>
            <person name="Sekiguchi K."/>
            <person name="Semple C.A."/>
            <person name="Seno S."/>
            <person name="Sessa L."/>
            <person name="Sheng Y."/>
            <person name="Shibata Y."/>
            <person name="Shimada H."/>
            <person name="Shimada K."/>
            <person name="Silva D."/>
            <person name="Sinclair B."/>
            <person name="Sperling S."/>
            <person name="Stupka E."/>
            <person name="Sugiura K."/>
            <person name="Sultana R."/>
            <person name="Takenaka Y."/>
            <person name="Taki K."/>
            <person name="Tammoja K."/>
            <person name="Tan S.L."/>
            <person name="Tang S."/>
            <person name="Taylor M.S."/>
            <person name="Tegner J."/>
            <person name="Teichmann S.A."/>
            <person name="Ueda H.R."/>
            <person name="van Nimwegen E."/>
            <person name="Verardo R."/>
            <person name="Wei C.L."/>
            <person name="Yagi K."/>
            <person name="Yamanishi H."/>
            <person name="Zabarovsky E."/>
            <person name="Zhu S."/>
            <person name="Zimmer A."/>
            <person name="Hide W."/>
            <person name="Bult C."/>
            <person name="Grimmond S.M."/>
            <person name="Teasdale R.D."/>
            <person name="Liu E.T."/>
            <person name="Brusic V."/>
            <person name="Quackenbush J."/>
            <person name="Wahlestedt C."/>
            <person name="Mattick J.S."/>
            <person name="Hume D.A."/>
            <person name="Kai C."/>
            <person name="Sasaki D."/>
            <person name="Tomaru Y."/>
            <person name="Fukuda S."/>
            <person name="Kanamori-Katayama M."/>
            <person name="Suzuki M."/>
            <person name="Aoki J."/>
            <person name="Arakawa T."/>
            <person name="Iida J."/>
            <person name="Imamura K."/>
            <person name="Itoh M."/>
            <person name="Kato T."/>
            <person name="Kawaji H."/>
            <person name="Kawagashira N."/>
            <person name="Kawashima T."/>
            <person name="Kojima M."/>
            <person name="Kondo S."/>
            <person name="Konno H."/>
            <person name="Nakano K."/>
            <person name="Ninomiya N."/>
            <person name="Nishio T."/>
            <person name="Okada M."/>
            <person name="Plessy C."/>
            <person name="Shibata K."/>
            <person name="Shiraki T."/>
            <person name="Suzuki S."/>
            <person name="Tagami M."/>
            <person name="Waki K."/>
            <person name="Watahiki A."/>
            <person name="Okamura-Oho Y."/>
            <person name="Suzuki H."/>
            <person name="Kawai J."/>
            <person name="Hayashizaki Y."/>
        </authorList>
    </citation>
    <scope>NUCLEOTIDE SEQUENCE [LARGE SCALE MRNA]</scope>
    <source>
        <strain>C57BL/6J</strain>
        <strain>NOD</strain>
        <tissue>Thymus</tissue>
    </source>
</reference>
<reference key="2">
    <citation type="journal article" date="2004" name="Genome Res.">
        <title>The status, quality, and expansion of the NIH full-length cDNA project: the Mammalian Gene Collection (MGC).</title>
        <authorList>
            <consortium name="The MGC Project Team"/>
        </authorList>
    </citation>
    <scope>NUCLEOTIDE SEQUENCE [LARGE SCALE MRNA]</scope>
    <source>
        <strain>FVB/N</strain>
        <tissue>Mammary tumor</tissue>
    </source>
</reference>
<reference key="3">
    <citation type="journal article" date="2010" name="Cell">
        <title>A tissue-specific atlas of mouse protein phosphorylation and expression.</title>
        <authorList>
            <person name="Huttlin E.L."/>
            <person name="Jedrychowski M.P."/>
            <person name="Elias J.E."/>
            <person name="Goswami T."/>
            <person name="Rad R."/>
            <person name="Beausoleil S.A."/>
            <person name="Villen J."/>
            <person name="Haas W."/>
            <person name="Sowa M.E."/>
            <person name="Gygi S.P."/>
        </authorList>
    </citation>
    <scope>IDENTIFICATION BY MASS SPECTROMETRY [LARGE SCALE ANALYSIS]</scope>
    <source>
        <tissue>Brain</tissue>
        <tissue>Brown adipose tissue</tissue>
        <tissue>Kidney</tissue>
        <tissue>Liver</tissue>
        <tissue>Testis</tissue>
    </source>
</reference>
<name>COA5_MOUSE</name>
<comment type="function">
    <text evidence="1">Involved in an early step of the mitochondrial complex IV assembly process.</text>
</comment>
<comment type="similarity">
    <text evidence="4">Belongs to the PET191 family.</text>
</comment>
<accession>Q99M07</accession>
<gene>
    <name type="primary">Coa5</name>
</gene>
<keyword id="KW-1015">Disulfide bond</keyword>
<keyword id="KW-0597">Phosphoprotein</keyword>
<keyword id="KW-1185">Reference proteome</keyword>
<protein>
    <recommendedName>
        <fullName>Cytochrome c oxidase assembly factor 5</fullName>
    </recommendedName>
</protein>
<feature type="chain" id="PRO_0000325877" description="Cytochrome c oxidase assembly factor 5">
    <location>
        <begin position="1"/>
        <end position="74"/>
    </location>
</feature>
<feature type="domain" description="CHCH" evidence="3">
    <location>
        <begin position="27"/>
        <end position="65"/>
    </location>
</feature>
<feature type="short sequence motif" description="Cx10C motif" evidence="3">
    <location>
        <begin position="30"/>
        <end position="41"/>
    </location>
</feature>
<feature type="short sequence motif" description="Cx9C motif" evidence="3">
    <location>
        <begin position="47"/>
        <end position="57"/>
    </location>
</feature>
<feature type="modified residue" description="Phosphoserine" evidence="2">
    <location>
        <position position="37"/>
    </location>
</feature>
<feature type="disulfide bond" evidence="3">
    <location>
        <begin position="30"/>
        <end position="57"/>
    </location>
</feature>
<feature type="disulfide bond" evidence="3">
    <location>
        <begin position="41"/>
        <end position="47"/>
    </location>
</feature>
<sequence length="74" mass="8359">MPRYYEDKPEGGACAGVKEDLGACLLQSACVLQEGKSPRQCLKEGNCRALQYSFFECKRSMLDARSRFRGRKGY</sequence>
<organism>
    <name type="scientific">Mus musculus</name>
    <name type="common">Mouse</name>
    <dbReference type="NCBI Taxonomy" id="10090"/>
    <lineage>
        <taxon>Eukaryota</taxon>
        <taxon>Metazoa</taxon>
        <taxon>Chordata</taxon>
        <taxon>Craniata</taxon>
        <taxon>Vertebrata</taxon>
        <taxon>Euteleostomi</taxon>
        <taxon>Mammalia</taxon>
        <taxon>Eutheria</taxon>
        <taxon>Euarchontoglires</taxon>
        <taxon>Glires</taxon>
        <taxon>Rodentia</taxon>
        <taxon>Myomorpha</taxon>
        <taxon>Muroidea</taxon>
        <taxon>Muridae</taxon>
        <taxon>Murinae</taxon>
        <taxon>Mus</taxon>
        <taxon>Mus</taxon>
    </lineage>
</organism>